<keyword id="KW-0030">Aminoacyl-tRNA synthetase</keyword>
<keyword id="KW-0067">ATP-binding</keyword>
<keyword id="KW-0963">Cytoplasm</keyword>
<keyword id="KW-0436">Ligase</keyword>
<keyword id="KW-0547">Nucleotide-binding</keyword>
<keyword id="KW-0648">Protein biosynthesis</keyword>
<gene>
    <name evidence="1" type="primary">hisS</name>
    <name type="ordered locus">PLES_11721</name>
</gene>
<sequence length="429" mass="47570">MSKSLQAIRGMNDILPEQTPAWRYLERTFAGLLDGYGYSEIRLPILEFTELFARGIGEGTDVVDKEMYTFLDRNGESLTMRPEGTAGCVRAVLEHGLSGGGQVQKLWYTGPMFRYEKPQKGRYRQFHQIGVEVFNLPGPDIDAELIILTWRLWQKLGMADAVTLQLNTLGSSEARARYREALVAYLQERFEQLDEDSQRRMTTNPLRILDSKVESTQALLVGAPTLHDYLDEESIAHFEGLKARLDAVGLRYEINQKLVRGLDYYCRTAFEWVTDKLGAQGTVCGGGRYDGLVSQFGGKPTPGVGFAMGVERLVLLLETLGVIPAELNRPADLYVCAFGEPAELAALTLAEQLRSAIPGIRLLVNAGAGSFKSQFKKADKSGARFALILGEDEVANRVVGFKPLRDEGEQQSIAWDALPEHLAACLEQA</sequence>
<protein>
    <recommendedName>
        <fullName evidence="1">Histidine--tRNA ligase</fullName>
        <ecNumber evidence="1">6.1.1.21</ecNumber>
    </recommendedName>
    <alternativeName>
        <fullName evidence="1">Histidyl-tRNA synthetase</fullName>
        <shortName evidence="1">HisRS</shortName>
    </alternativeName>
</protein>
<comment type="catalytic activity">
    <reaction evidence="1">
        <text>tRNA(His) + L-histidine + ATP = L-histidyl-tRNA(His) + AMP + diphosphate + H(+)</text>
        <dbReference type="Rhea" id="RHEA:17313"/>
        <dbReference type="Rhea" id="RHEA-COMP:9665"/>
        <dbReference type="Rhea" id="RHEA-COMP:9689"/>
        <dbReference type="ChEBI" id="CHEBI:15378"/>
        <dbReference type="ChEBI" id="CHEBI:30616"/>
        <dbReference type="ChEBI" id="CHEBI:33019"/>
        <dbReference type="ChEBI" id="CHEBI:57595"/>
        <dbReference type="ChEBI" id="CHEBI:78442"/>
        <dbReference type="ChEBI" id="CHEBI:78527"/>
        <dbReference type="ChEBI" id="CHEBI:456215"/>
        <dbReference type="EC" id="6.1.1.21"/>
    </reaction>
</comment>
<comment type="subunit">
    <text evidence="1">Homodimer.</text>
</comment>
<comment type="subcellular location">
    <subcellularLocation>
        <location evidence="1">Cytoplasm</location>
    </subcellularLocation>
</comment>
<comment type="similarity">
    <text evidence="1">Belongs to the class-II aminoacyl-tRNA synthetase family.</text>
</comment>
<accession>B7UWI9</accession>
<reference key="1">
    <citation type="journal article" date="2009" name="Genome Res.">
        <title>Newly introduced genomic prophage islands are critical determinants of in vivo competitiveness in the Liverpool epidemic strain of Pseudomonas aeruginosa.</title>
        <authorList>
            <person name="Winstanley C."/>
            <person name="Langille M.G.I."/>
            <person name="Fothergill J.L."/>
            <person name="Kukavica-Ibrulj I."/>
            <person name="Paradis-Bleau C."/>
            <person name="Sanschagrin F."/>
            <person name="Thomson N.R."/>
            <person name="Winsor G.L."/>
            <person name="Quail M.A."/>
            <person name="Lennard N."/>
            <person name="Bignell A."/>
            <person name="Clarke L."/>
            <person name="Seeger K."/>
            <person name="Saunders D."/>
            <person name="Harris D."/>
            <person name="Parkhill J."/>
            <person name="Hancock R.E.W."/>
            <person name="Brinkman F.S.L."/>
            <person name="Levesque R.C."/>
        </authorList>
    </citation>
    <scope>NUCLEOTIDE SEQUENCE [LARGE SCALE GENOMIC DNA]</scope>
    <source>
        <strain>LESB58</strain>
    </source>
</reference>
<proteinExistence type="inferred from homology"/>
<organism>
    <name type="scientific">Pseudomonas aeruginosa (strain LESB58)</name>
    <dbReference type="NCBI Taxonomy" id="557722"/>
    <lineage>
        <taxon>Bacteria</taxon>
        <taxon>Pseudomonadati</taxon>
        <taxon>Pseudomonadota</taxon>
        <taxon>Gammaproteobacteria</taxon>
        <taxon>Pseudomonadales</taxon>
        <taxon>Pseudomonadaceae</taxon>
        <taxon>Pseudomonas</taxon>
    </lineage>
</organism>
<feature type="chain" id="PRO_1000199146" description="Histidine--tRNA ligase">
    <location>
        <begin position="1"/>
        <end position="429"/>
    </location>
</feature>
<name>SYH_PSEA8</name>
<dbReference type="EC" id="6.1.1.21" evidence="1"/>
<dbReference type="EMBL" id="FM209186">
    <property type="protein sequence ID" value="CAW25899.1"/>
    <property type="molecule type" value="Genomic_DNA"/>
</dbReference>
<dbReference type="RefSeq" id="WP_003106652.1">
    <property type="nucleotide sequence ID" value="NC_011770.1"/>
</dbReference>
<dbReference type="SMR" id="B7UWI9"/>
<dbReference type="KEGG" id="pag:PLES_11721"/>
<dbReference type="HOGENOM" id="CLU_025113_1_1_6"/>
<dbReference type="GO" id="GO:0005737">
    <property type="term" value="C:cytoplasm"/>
    <property type="evidence" value="ECO:0007669"/>
    <property type="project" value="UniProtKB-SubCell"/>
</dbReference>
<dbReference type="GO" id="GO:0005524">
    <property type="term" value="F:ATP binding"/>
    <property type="evidence" value="ECO:0007669"/>
    <property type="project" value="UniProtKB-UniRule"/>
</dbReference>
<dbReference type="GO" id="GO:0004821">
    <property type="term" value="F:histidine-tRNA ligase activity"/>
    <property type="evidence" value="ECO:0007669"/>
    <property type="project" value="UniProtKB-UniRule"/>
</dbReference>
<dbReference type="GO" id="GO:0006427">
    <property type="term" value="P:histidyl-tRNA aminoacylation"/>
    <property type="evidence" value="ECO:0007669"/>
    <property type="project" value="UniProtKB-UniRule"/>
</dbReference>
<dbReference type="CDD" id="cd00773">
    <property type="entry name" value="HisRS-like_core"/>
    <property type="match status" value="1"/>
</dbReference>
<dbReference type="CDD" id="cd00859">
    <property type="entry name" value="HisRS_anticodon"/>
    <property type="match status" value="1"/>
</dbReference>
<dbReference type="FunFam" id="3.30.930.10:FF:000005">
    <property type="entry name" value="Histidine--tRNA ligase"/>
    <property type="match status" value="1"/>
</dbReference>
<dbReference type="Gene3D" id="3.40.50.800">
    <property type="entry name" value="Anticodon-binding domain"/>
    <property type="match status" value="1"/>
</dbReference>
<dbReference type="Gene3D" id="3.30.930.10">
    <property type="entry name" value="Bira Bifunctional Protein, Domain 2"/>
    <property type="match status" value="1"/>
</dbReference>
<dbReference type="HAMAP" id="MF_00127">
    <property type="entry name" value="His_tRNA_synth"/>
    <property type="match status" value="1"/>
</dbReference>
<dbReference type="InterPro" id="IPR006195">
    <property type="entry name" value="aa-tRNA-synth_II"/>
</dbReference>
<dbReference type="InterPro" id="IPR045864">
    <property type="entry name" value="aa-tRNA-synth_II/BPL/LPL"/>
</dbReference>
<dbReference type="InterPro" id="IPR004154">
    <property type="entry name" value="Anticodon-bd"/>
</dbReference>
<dbReference type="InterPro" id="IPR036621">
    <property type="entry name" value="Anticodon-bd_dom_sf"/>
</dbReference>
<dbReference type="InterPro" id="IPR015807">
    <property type="entry name" value="His-tRNA-ligase"/>
</dbReference>
<dbReference type="InterPro" id="IPR041715">
    <property type="entry name" value="HisRS-like_core"/>
</dbReference>
<dbReference type="InterPro" id="IPR004516">
    <property type="entry name" value="HisRS/HisZ"/>
</dbReference>
<dbReference type="InterPro" id="IPR033656">
    <property type="entry name" value="HisRS_anticodon"/>
</dbReference>
<dbReference type="NCBIfam" id="TIGR00442">
    <property type="entry name" value="hisS"/>
    <property type="match status" value="1"/>
</dbReference>
<dbReference type="PANTHER" id="PTHR43707:SF1">
    <property type="entry name" value="HISTIDINE--TRNA LIGASE, MITOCHONDRIAL-RELATED"/>
    <property type="match status" value="1"/>
</dbReference>
<dbReference type="PANTHER" id="PTHR43707">
    <property type="entry name" value="HISTIDYL-TRNA SYNTHETASE"/>
    <property type="match status" value="1"/>
</dbReference>
<dbReference type="Pfam" id="PF03129">
    <property type="entry name" value="HGTP_anticodon"/>
    <property type="match status" value="1"/>
</dbReference>
<dbReference type="Pfam" id="PF13393">
    <property type="entry name" value="tRNA-synt_His"/>
    <property type="match status" value="1"/>
</dbReference>
<dbReference type="PIRSF" id="PIRSF001549">
    <property type="entry name" value="His-tRNA_synth"/>
    <property type="match status" value="1"/>
</dbReference>
<dbReference type="SUPFAM" id="SSF52954">
    <property type="entry name" value="Class II aaRS ABD-related"/>
    <property type="match status" value="1"/>
</dbReference>
<dbReference type="SUPFAM" id="SSF55681">
    <property type="entry name" value="Class II aaRS and biotin synthetases"/>
    <property type="match status" value="1"/>
</dbReference>
<dbReference type="PROSITE" id="PS50862">
    <property type="entry name" value="AA_TRNA_LIGASE_II"/>
    <property type="match status" value="1"/>
</dbReference>
<evidence type="ECO:0000255" key="1">
    <source>
        <dbReference type="HAMAP-Rule" id="MF_00127"/>
    </source>
</evidence>